<protein>
    <recommendedName>
        <fullName>Apo-citrate lyase phosphoribosyl-dephospho-CoA transferase</fullName>
        <ecNumber evidence="1">2.7.7.61</ecNumber>
    </recommendedName>
    <alternativeName>
        <fullName evidence="1">Apo-ACP nucleodityltransferase</fullName>
    </alternativeName>
    <alternativeName>
        <fullName evidence="1">Holo-ACP synthase</fullName>
    </alternativeName>
    <alternativeName>
        <fullName evidence="1">Holo-citrate lyase synthase</fullName>
    </alternativeName>
</protein>
<keyword id="KW-0548">Nucleotidyltransferase</keyword>
<keyword id="KW-1185">Reference proteome</keyword>
<keyword id="KW-0808">Transferase</keyword>
<proteinExistence type="inferred from homology"/>
<accession>A1A8P3</accession>
<gene>
    <name evidence="1" type="primary">citX</name>
    <name type="ordered locus">Ecok1_05390</name>
    <name type="ORF">APECO1_1437</name>
</gene>
<name>CITX_ECOK1</name>
<sequence>MHLLPEFASHHAVSIPELLVSRDERQARQHAWLKRHPVPLVSFTVVAPGPIKDSEVTRRIFNHGVTALRALATKQGWQIQEQAALVSASGPEGMLSIAAPARDLKLATIELEHSHPLGRLWDIDVLTPEGDILSRRDYSLPPRRCLLCEQSAAVCARGKTHQLTDLLNRMEALLNDVDACNVN</sequence>
<feature type="chain" id="PRO_1000049601" description="Apo-citrate lyase phosphoribosyl-dephospho-CoA transferase">
    <location>
        <begin position="1"/>
        <end position="183"/>
    </location>
</feature>
<evidence type="ECO:0000255" key="1">
    <source>
        <dbReference type="HAMAP-Rule" id="MF_00398"/>
    </source>
</evidence>
<dbReference type="EC" id="2.7.7.61" evidence="1"/>
<dbReference type="EMBL" id="CP000468">
    <property type="protein sequence ID" value="ABJ00033.1"/>
    <property type="molecule type" value="Genomic_DNA"/>
</dbReference>
<dbReference type="RefSeq" id="WP_000550390.1">
    <property type="nucleotide sequence ID" value="NZ_CADILS010000006.1"/>
</dbReference>
<dbReference type="SMR" id="A1A8P3"/>
<dbReference type="KEGG" id="ecv:APECO1_1437"/>
<dbReference type="HOGENOM" id="CLU_104529_1_1_6"/>
<dbReference type="Proteomes" id="UP000008216">
    <property type="component" value="Chromosome"/>
</dbReference>
<dbReference type="GO" id="GO:0050519">
    <property type="term" value="F:holo-citrate lyase synthase activity"/>
    <property type="evidence" value="ECO:0007669"/>
    <property type="project" value="UniProtKB-UniRule"/>
</dbReference>
<dbReference type="GO" id="GO:0051191">
    <property type="term" value="P:prosthetic group biosynthetic process"/>
    <property type="evidence" value="ECO:0007669"/>
    <property type="project" value="InterPro"/>
</dbReference>
<dbReference type="HAMAP" id="MF_00398">
    <property type="entry name" value="CitX"/>
    <property type="match status" value="1"/>
</dbReference>
<dbReference type="InterPro" id="IPR005551">
    <property type="entry name" value="CitX"/>
</dbReference>
<dbReference type="NCBIfam" id="TIGR03124">
    <property type="entry name" value="citrate_citX"/>
    <property type="match status" value="1"/>
</dbReference>
<dbReference type="NCBIfam" id="NF002383">
    <property type="entry name" value="PRK01392.1"/>
    <property type="match status" value="1"/>
</dbReference>
<dbReference type="Pfam" id="PF03802">
    <property type="entry name" value="CitX"/>
    <property type="match status" value="1"/>
</dbReference>
<comment type="function">
    <text evidence="1">Transfers 2-(5''-triphosphoribosyl)-3'-dephosphocoenzyme-A on a serine residue to the apo-acyl carrier protein (gamma chain) of the citrate lyase to yield holo-acyl carrier protein.</text>
</comment>
<comment type="catalytic activity">
    <reaction evidence="1">
        <text>apo-[citrate lyase ACP] + 2'-(5''-triphospho-alpha-D-ribosyl)-3'-dephospho-CoA = holo-[citrate lyase ACP] + diphosphate</text>
        <dbReference type="Rhea" id="RHEA:16333"/>
        <dbReference type="Rhea" id="RHEA-COMP:10157"/>
        <dbReference type="Rhea" id="RHEA-COMP:10158"/>
        <dbReference type="ChEBI" id="CHEBI:29999"/>
        <dbReference type="ChEBI" id="CHEBI:33019"/>
        <dbReference type="ChEBI" id="CHEBI:61378"/>
        <dbReference type="ChEBI" id="CHEBI:82683"/>
        <dbReference type="EC" id="2.7.7.61"/>
    </reaction>
</comment>
<comment type="similarity">
    <text evidence="1">Belongs to the CitX family.</text>
</comment>
<organism>
    <name type="scientific">Escherichia coli O1:K1 / APEC</name>
    <dbReference type="NCBI Taxonomy" id="405955"/>
    <lineage>
        <taxon>Bacteria</taxon>
        <taxon>Pseudomonadati</taxon>
        <taxon>Pseudomonadota</taxon>
        <taxon>Gammaproteobacteria</taxon>
        <taxon>Enterobacterales</taxon>
        <taxon>Enterobacteriaceae</taxon>
        <taxon>Escherichia</taxon>
    </lineage>
</organism>
<reference key="1">
    <citation type="journal article" date="2007" name="J. Bacteriol.">
        <title>The genome sequence of avian pathogenic Escherichia coli strain O1:K1:H7 shares strong similarities with human extraintestinal pathogenic E. coli genomes.</title>
        <authorList>
            <person name="Johnson T.J."/>
            <person name="Kariyawasam S."/>
            <person name="Wannemuehler Y."/>
            <person name="Mangiamele P."/>
            <person name="Johnson S.J."/>
            <person name="Doetkott C."/>
            <person name="Skyberg J.A."/>
            <person name="Lynne A.M."/>
            <person name="Johnson J.R."/>
            <person name="Nolan L.K."/>
        </authorList>
    </citation>
    <scope>NUCLEOTIDE SEQUENCE [LARGE SCALE GENOMIC DNA]</scope>
</reference>